<feature type="chain" id="PRO_0000072805" description="Horcolin">
    <location>
        <begin position="1"/>
        <end position="146"/>
    </location>
</feature>
<feature type="domain" description="Jacalin-type lectin" evidence="1">
    <location>
        <begin position="4"/>
        <end position="146"/>
    </location>
</feature>
<feature type="region of interest" description="Disordered" evidence="2">
    <location>
        <begin position="1"/>
        <end position="21"/>
    </location>
</feature>
<evidence type="ECO:0000255" key="1">
    <source>
        <dbReference type="PROSITE-ProRule" id="PRU01088"/>
    </source>
</evidence>
<evidence type="ECO:0000256" key="2">
    <source>
        <dbReference type="SAM" id="MobiDB-lite"/>
    </source>
</evidence>
<evidence type="ECO:0000269" key="3">
    <source>
    </source>
</evidence>
<evidence type="ECO:0000305" key="4"/>
<proteinExistence type="evidence at protein level"/>
<keyword id="KW-0052">Apoplast</keyword>
<keyword id="KW-0903">Direct protein sequencing</keyword>
<keyword id="KW-0430">Lectin</keyword>
<keyword id="KW-0465">Mannose-binding</keyword>
<keyword id="KW-1185">Reference proteome</keyword>
<keyword id="KW-0964">Secreted</keyword>
<comment type="function">
    <text evidence="3">Mannose-specific lectin. Has a weak agglutinating activity against rabbit erythrocytes.</text>
</comment>
<comment type="subcellular location">
    <subcellularLocation>
        <location evidence="3 4">Secreted</location>
        <location evidence="3 4">Extracellular space</location>
        <location evidence="3 4">Apoplast</location>
    </subcellularLocation>
</comment>
<comment type="tissue specificity">
    <text evidence="3">Expressed in both light- and dark-grown coleoptiles, but not in leaves or roots.</text>
</comment>
<comment type="miscellaneous">
    <text>On the 2D-gel the determined MW of this protein is: 15.3 kDa.</text>
</comment>
<comment type="similarity">
    <text evidence="1 4">Belongs to the jacalin lectin family.</text>
</comment>
<name>LECH_HORVV</name>
<accession>P82953</accession>
<accession>Q8W009</accession>
<dbReference type="EMBL" id="AY033628">
    <property type="protein sequence ID" value="AAK54458.1"/>
    <property type="molecule type" value="mRNA"/>
</dbReference>
<dbReference type="SMR" id="P82953"/>
<dbReference type="FunCoup" id="P82953">
    <property type="interactions" value="13"/>
</dbReference>
<dbReference type="STRING" id="112509.P82953"/>
<dbReference type="PaxDb" id="4513-MLOC_75811.1"/>
<dbReference type="eggNOG" id="ENOG502S4MA">
    <property type="taxonomic scope" value="Eukaryota"/>
</dbReference>
<dbReference type="InParanoid" id="P82953"/>
<dbReference type="Proteomes" id="UP000011116">
    <property type="component" value="Unassembled WGS sequence"/>
</dbReference>
<dbReference type="GO" id="GO:0048046">
    <property type="term" value="C:apoplast"/>
    <property type="evidence" value="ECO:0007669"/>
    <property type="project" value="UniProtKB-SubCell"/>
</dbReference>
<dbReference type="GO" id="GO:0005537">
    <property type="term" value="F:D-mannose binding"/>
    <property type="evidence" value="ECO:0007669"/>
    <property type="project" value="UniProtKB-KW"/>
</dbReference>
<dbReference type="CDD" id="cd09612">
    <property type="entry name" value="Jacalin"/>
    <property type="match status" value="1"/>
</dbReference>
<dbReference type="Gene3D" id="2.100.10.30">
    <property type="entry name" value="Jacalin-like lectin domain"/>
    <property type="match status" value="1"/>
</dbReference>
<dbReference type="InterPro" id="IPR001229">
    <property type="entry name" value="Jacalin-like_lectin_dom"/>
</dbReference>
<dbReference type="InterPro" id="IPR033734">
    <property type="entry name" value="Jacalin-like_lectin_dom_plant"/>
</dbReference>
<dbReference type="InterPro" id="IPR036404">
    <property type="entry name" value="Jacalin-like_lectin_dom_sf"/>
</dbReference>
<dbReference type="PANTHER" id="PTHR46506">
    <property type="entry name" value="OS05G0143600 PROTEIN"/>
    <property type="match status" value="1"/>
</dbReference>
<dbReference type="Pfam" id="PF01419">
    <property type="entry name" value="Jacalin"/>
    <property type="match status" value="1"/>
</dbReference>
<dbReference type="SMART" id="SM00915">
    <property type="entry name" value="Jacalin"/>
    <property type="match status" value="1"/>
</dbReference>
<dbReference type="SUPFAM" id="SSF51101">
    <property type="entry name" value="Mannose-binding lectins"/>
    <property type="match status" value="1"/>
</dbReference>
<dbReference type="PROSITE" id="PS51752">
    <property type="entry name" value="JACALIN_LECTIN"/>
    <property type="match status" value="1"/>
</dbReference>
<organism>
    <name type="scientific">Hordeum vulgare subsp. vulgare</name>
    <name type="common">Domesticated barley</name>
    <dbReference type="NCBI Taxonomy" id="112509"/>
    <lineage>
        <taxon>Eukaryota</taxon>
        <taxon>Viridiplantae</taxon>
        <taxon>Streptophyta</taxon>
        <taxon>Embryophyta</taxon>
        <taxon>Tracheophyta</taxon>
        <taxon>Spermatophyta</taxon>
        <taxon>Magnoliopsida</taxon>
        <taxon>Liliopsida</taxon>
        <taxon>Poales</taxon>
        <taxon>Poaceae</taxon>
        <taxon>BOP clade</taxon>
        <taxon>Pooideae</taxon>
        <taxon>Triticodae</taxon>
        <taxon>Triticeae</taxon>
        <taxon>Hordeinae</taxon>
        <taxon>Hordeum</taxon>
    </lineage>
</organism>
<sequence length="146" mass="15122">MSKPVKIGPWGGNGGSERDVQPKPIRMVSMTVSSGAIVDAIAFTYVGTDNVQHSSGIKWGGTGGTEDTINLDATNYVTEISGTVGKFGTDDIVTSLKIITSKGVTRTYGSGTGIPFRVPVLDGGKIAGFFGRAGAFLDAIGFYITP</sequence>
<protein>
    <recommendedName>
        <fullName>Horcolin</fullName>
    </recommendedName>
    <alternativeName>
        <fullName>Agglutinin</fullName>
    </alternativeName>
    <alternativeName>
        <fullName>Mannose-specific lectin</fullName>
    </alternativeName>
</protein>
<reference key="1">
    <citation type="journal article" date="2007" name="Planta">
        <title>Purification and characterisation of a jacalin-related, coleoptile specific lectin from Hordeum vulgare.</title>
        <authorList>
            <person name="Grunwald I."/>
            <person name="Heinig I."/>
            <person name="Thole H.H."/>
            <person name="Neumann D."/>
            <person name="Kahmann U."/>
            <person name="Kloppstech K."/>
            <person name="Gau A.E."/>
        </authorList>
    </citation>
    <scope>NUCLEOTIDE SEQUENCE [MRNA]</scope>
    <scope>PROTEIN SEQUENCE OF 7-16; 32-52; 59-97 AND 103-108</scope>
    <scope>FUNCTION</scope>
    <scope>SUBCELLULAR LOCATION</scope>
    <scope>TISSUE SPECIFICITY</scope>
    <source>
        <strain>cv. Apex</strain>
        <tissue>Coleoptile</tissue>
    </source>
</reference>